<keyword id="KW-0028">Amino-acid biosynthesis</keyword>
<keyword id="KW-0032">Aminotransferase</keyword>
<keyword id="KW-0963">Cytoplasm</keyword>
<keyword id="KW-0663">Pyridoxal phosphate</keyword>
<keyword id="KW-0664">Pyridoxine biosynthesis</keyword>
<keyword id="KW-0718">Serine biosynthesis</keyword>
<keyword id="KW-0808">Transferase</keyword>
<protein>
    <recommendedName>
        <fullName evidence="1">Phosphoserine aminotransferase</fullName>
        <ecNumber evidence="1">2.6.1.52</ecNumber>
    </recommendedName>
    <alternativeName>
        <fullName evidence="1">Phosphohydroxythreonine aminotransferase</fullName>
        <shortName evidence="1">PSAT</shortName>
    </alternativeName>
</protein>
<proteinExistence type="inferred from homology"/>
<dbReference type="EC" id="2.6.1.52" evidence="1"/>
<dbReference type="EMBL" id="AE008923">
    <property type="protein sequence ID" value="AAM36516.1"/>
    <property type="molecule type" value="Genomic_DNA"/>
</dbReference>
<dbReference type="RefSeq" id="WP_011051056.1">
    <property type="nucleotide sequence ID" value="NC_003919.1"/>
</dbReference>
<dbReference type="SMR" id="Q8PLY7"/>
<dbReference type="GeneID" id="66910806"/>
<dbReference type="KEGG" id="xac:XAC1648"/>
<dbReference type="eggNOG" id="COG1932">
    <property type="taxonomic scope" value="Bacteria"/>
</dbReference>
<dbReference type="HOGENOM" id="CLU_034866_0_2_6"/>
<dbReference type="UniPathway" id="UPA00135">
    <property type="reaction ID" value="UER00197"/>
</dbReference>
<dbReference type="UniPathway" id="UPA00244">
    <property type="reaction ID" value="UER00311"/>
</dbReference>
<dbReference type="Proteomes" id="UP000000576">
    <property type="component" value="Chromosome"/>
</dbReference>
<dbReference type="GO" id="GO:0005737">
    <property type="term" value="C:cytoplasm"/>
    <property type="evidence" value="ECO:0007669"/>
    <property type="project" value="UniProtKB-SubCell"/>
</dbReference>
<dbReference type="GO" id="GO:0004648">
    <property type="term" value="F:O-phospho-L-serine:2-oxoglutarate aminotransferase activity"/>
    <property type="evidence" value="ECO:0007669"/>
    <property type="project" value="UniProtKB-UniRule"/>
</dbReference>
<dbReference type="GO" id="GO:0030170">
    <property type="term" value="F:pyridoxal phosphate binding"/>
    <property type="evidence" value="ECO:0007669"/>
    <property type="project" value="UniProtKB-UniRule"/>
</dbReference>
<dbReference type="GO" id="GO:0006564">
    <property type="term" value="P:L-serine biosynthetic process"/>
    <property type="evidence" value="ECO:0007669"/>
    <property type="project" value="UniProtKB-UniRule"/>
</dbReference>
<dbReference type="GO" id="GO:0008615">
    <property type="term" value="P:pyridoxine biosynthetic process"/>
    <property type="evidence" value="ECO:0007669"/>
    <property type="project" value="UniProtKB-UniRule"/>
</dbReference>
<dbReference type="FunFam" id="3.40.640.10:FF:000010">
    <property type="entry name" value="Phosphoserine aminotransferase"/>
    <property type="match status" value="1"/>
</dbReference>
<dbReference type="FunFam" id="3.90.1150.10:FF:000006">
    <property type="entry name" value="Phosphoserine aminotransferase"/>
    <property type="match status" value="1"/>
</dbReference>
<dbReference type="Gene3D" id="3.90.1150.10">
    <property type="entry name" value="Aspartate Aminotransferase, domain 1"/>
    <property type="match status" value="1"/>
</dbReference>
<dbReference type="Gene3D" id="3.40.640.10">
    <property type="entry name" value="Type I PLP-dependent aspartate aminotransferase-like (Major domain)"/>
    <property type="match status" value="1"/>
</dbReference>
<dbReference type="HAMAP" id="MF_00160">
    <property type="entry name" value="SerC_aminotrans_5"/>
    <property type="match status" value="1"/>
</dbReference>
<dbReference type="InterPro" id="IPR000192">
    <property type="entry name" value="Aminotrans_V_dom"/>
</dbReference>
<dbReference type="InterPro" id="IPR020578">
    <property type="entry name" value="Aminotrans_V_PyrdxlP_BS"/>
</dbReference>
<dbReference type="InterPro" id="IPR022278">
    <property type="entry name" value="Pser_aminoTfrase"/>
</dbReference>
<dbReference type="InterPro" id="IPR015424">
    <property type="entry name" value="PyrdxlP-dep_Trfase"/>
</dbReference>
<dbReference type="InterPro" id="IPR015421">
    <property type="entry name" value="PyrdxlP-dep_Trfase_major"/>
</dbReference>
<dbReference type="InterPro" id="IPR015422">
    <property type="entry name" value="PyrdxlP-dep_Trfase_small"/>
</dbReference>
<dbReference type="NCBIfam" id="NF003764">
    <property type="entry name" value="PRK05355.1"/>
    <property type="match status" value="1"/>
</dbReference>
<dbReference type="NCBIfam" id="TIGR01364">
    <property type="entry name" value="serC_1"/>
    <property type="match status" value="1"/>
</dbReference>
<dbReference type="PANTHER" id="PTHR43247">
    <property type="entry name" value="PHOSPHOSERINE AMINOTRANSFERASE"/>
    <property type="match status" value="1"/>
</dbReference>
<dbReference type="PANTHER" id="PTHR43247:SF1">
    <property type="entry name" value="PHOSPHOSERINE AMINOTRANSFERASE"/>
    <property type="match status" value="1"/>
</dbReference>
<dbReference type="Pfam" id="PF00266">
    <property type="entry name" value="Aminotran_5"/>
    <property type="match status" value="1"/>
</dbReference>
<dbReference type="PIRSF" id="PIRSF000525">
    <property type="entry name" value="SerC"/>
    <property type="match status" value="1"/>
</dbReference>
<dbReference type="SUPFAM" id="SSF53383">
    <property type="entry name" value="PLP-dependent transferases"/>
    <property type="match status" value="1"/>
</dbReference>
<dbReference type="PROSITE" id="PS00595">
    <property type="entry name" value="AA_TRANSFER_CLASS_5"/>
    <property type="match status" value="1"/>
</dbReference>
<sequence length="361" mass="38680">MTRAFNFSAGPATLPESVLRQAQAEMVEWNGVGASIVEISHRSADFMAVAAAAEADLRSLLSIPDDYAVLFTAGGATTIQALLPLNFAAPGQAADYVITGHWGKTAIKQAATYVDARIAADAQADGFVDIPAAASWTLSPHSAYVHITANETIHGVEFRDTPDVGTLPLFADFSSSIASEPLDISRYGLIYAGAQKNLGPVGISVVIVRRDLLERAGQPRADIFNYASQVARDSMLNTPPTWNWYLLGLTVKWMLEQGGVQEFARRNAEKAALVYGAIDGSGGFYRNLIKPAVRSRMNIPFFLPDERLDALFVSESKAAGLLALKGHKAVGGIRASLYNAMPVAGAQALAAFMHDFQQRHG</sequence>
<reference key="1">
    <citation type="journal article" date="2002" name="Nature">
        <title>Comparison of the genomes of two Xanthomonas pathogens with differing host specificities.</title>
        <authorList>
            <person name="da Silva A.C.R."/>
            <person name="Ferro J.A."/>
            <person name="Reinach F.C."/>
            <person name="Farah C.S."/>
            <person name="Furlan L.R."/>
            <person name="Quaggio R.B."/>
            <person name="Monteiro-Vitorello C.B."/>
            <person name="Van Sluys M.A."/>
            <person name="Almeida N.F. Jr."/>
            <person name="Alves L.M.C."/>
            <person name="do Amaral A.M."/>
            <person name="Bertolini M.C."/>
            <person name="Camargo L.E.A."/>
            <person name="Camarotte G."/>
            <person name="Cannavan F."/>
            <person name="Cardozo J."/>
            <person name="Chambergo F."/>
            <person name="Ciapina L.P."/>
            <person name="Cicarelli R.M.B."/>
            <person name="Coutinho L.L."/>
            <person name="Cursino-Santos J.R."/>
            <person name="El-Dorry H."/>
            <person name="Faria J.B."/>
            <person name="Ferreira A.J.S."/>
            <person name="Ferreira R.C.C."/>
            <person name="Ferro M.I.T."/>
            <person name="Formighieri E.F."/>
            <person name="Franco M.C."/>
            <person name="Greggio C.C."/>
            <person name="Gruber A."/>
            <person name="Katsuyama A.M."/>
            <person name="Kishi L.T."/>
            <person name="Leite R.P."/>
            <person name="Lemos E.G.M."/>
            <person name="Lemos M.V.F."/>
            <person name="Locali E.C."/>
            <person name="Machado M.A."/>
            <person name="Madeira A.M.B.N."/>
            <person name="Martinez-Rossi N.M."/>
            <person name="Martins E.C."/>
            <person name="Meidanis J."/>
            <person name="Menck C.F.M."/>
            <person name="Miyaki C.Y."/>
            <person name="Moon D.H."/>
            <person name="Moreira L.M."/>
            <person name="Novo M.T.M."/>
            <person name="Okura V.K."/>
            <person name="Oliveira M.C."/>
            <person name="Oliveira V.R."/>
            <person name="Pereira H.A."/>
            <person name="Rossi A."/>
            <person name="Sena J.A.D."/>
            <person name="Silva C."/>
            <person name="de Souza R.F."/>
            <person name="Spinola L.A.F."/>
            <person name="Takita M.A."/>
            <person name="Tamura R.E."/>
            <person name="Teixeira E.C."/>
            <person name="Tezza R.I.D."/>
            <person name="Trindade dos Santos M."/>
            <person name="Truffi D."/>
            <person name="Tsai S.M."/>
            <person name="White F.F."/>
            <person name="Setubal J.C."/>
            <person name="Kitajima J.P."/>
        </authorList>
    </citation>
    <scope>NUCLEOTIDE SEQUENCE [LARGE SCALE GENOMIC DNA]</scope>
    <source>
        <strain>306</strain>
    </source>
</reference>
<gene>
    <name evidence="1" type="primary">serC</name>
    <name type="ordered locus">XAC1648</name>
</gene>
<accession>Q8PLY7</accession>
<comment type="function">
    <text evidence="1">Catalyzes the reversible conversion of 3-phosphohydroxypyruvate to phosphoserine and of 3-hydroxy-2-oxo-4-phosphonooxybutanoate to phosphohydroxythreonine.</text>
</comment>
<comment type="catalytic activity">
    <reaction evidence="1">
        <text>O-phospho-L-serine + 2-oxoglutarate = 3-phosphooxypyruvate + L-glutamate</text>
        <dbReference type="Rhea" id="RHEA:14329"/>
        <dbReference type="ChEBI" id="CHEBI:16810"/>
        <dbReference type="ChEBI" id="CHEBI:18110"/>
        <dbReference type="ChEBI" id="CHEBI:29985"/>
        <dbReference type="ChEBI" id="CHEBI:57524"/>
        <dbReference type="EC" id="2.6.1.52"/>
    </reaction>
</comment>
<comment type="catalytic activity">
    <reaction evidence="1">
        <text>4-(phosphooxy)-L-threonine + 2-oxoglutarate = (R)-3-hydroxy-2-oxo-4-phosphooxybutanoate + L-glutamate</text>
        <dbReference type="Rhea" id="RHEA:16573"/>
        <dbReference type="ChEBI" id="CHEBI:16810"/>
        <dbReference type="ChEBI" id="CHEBI:29985"/>
        <dbReference type="ChEBI" id="CHEBI:58452"/>
        <dbReference type="ChEBI" id="CHEBI:58538"/>
        <dbReference type="EC" id="2.6.1.52"/>
    </reaction>
</comment>
<comment type="cofactor">
    <cofactor evidence="1">
        <name>pyridoxal 5'-phosphate</name>
        <dbReference type="ChEBI" id="CHEBI:597326"/>
    </cofactor>
    <text evidence="1">Binds 1 pyridoxal phosphate per subunit.</text>
</comment>
<comment type="pathway">
    <text evidence="1">Amino-acid biosynthesis; L-serine biosynthesis; L-serine from 3-phospho-D-glycerate: step 2/3.</text>
</comment>
<comment type="pathway">
    <text evidence="1">Cofactor biosynthesis; pyridoxine 5'-phosphate biosynthesis; pyridoxine 5'-phosphate from D-erythrose 4-phosphate: step 3/5.</text>
</comment>
<comment type="subunit">
    <text evidence="1">Homodimer.</text>
</comment>
<comment type="subcellular location">
    <subcellularLocation>
        <location evidence="1">Cytoplasm</location>
    </subcellularLocation>
</comment>
<comment type="similarity">
    <text evidence="1">Belongs to the class-V pyridoxal-phosphate-dependent aminotransferase family. SerC subfamily.</text>
</comment>
<organism>
    <name type="scientific">Xanthomonas axonopodis pv. citri (strain 306)</name>
    <dbReference type="NCBI Taxonomy" id="190486"/>
    <lineage>
        <taxon>Bacteria</taxon>
        <taxon>Pseudomonadati</taxon>
        <taxon>Pseudomonadota</taxon>
        <taxon>Gammaproteobacteria</taxon>
        <taxon>Lysobacterales</taxon>
        <taxon>Lysobacteraceae</taxon>
        <taxon>Xanthomonas</taxon>
    </lineage>
</organism>
<evidence type="ECO:0000255" key="1">
    <source>
        <dbReference type="HAMAP-Rule" id="MF_00160"/>
    </source>
</evidence>
<name>SERC_XANAC</name>
<feature type="chain" id="PRO_0000150220" description="Phosphoserine aminotransferase">
    <location>
        <begin position="1"/>
        <end position="361"/>
    </location>
</feature>
<feature type="binding site" evidence="1">
    <location>
        <position position="42"/>
    </location>
    <ligand>
        <name>L-glutamate</name>
        <dbReference type="ChEBI" id="CHEBI:29985"/>
    </ligand>
</feature>
<feature type="binding site" evidence="1">
    <location>
        <begin position="76"/>
        <end position="77"/>
    </location>
    <ligand>
        <name>pyridoxal 5'-phosphate</name>
        <dbReference type="ChEBI" id="CHEBI:597326"/>
    </ligand>
</feature>
<feature type="binding site" evidence="1">
    <location>
        <position position="102"/>
    </location>
    <ligand>
        <name>pyridoxal 5'-phosphate</name>
        <dbReference type="ChEBI" id="CHEBI:597326"/>
    </ligand>
</feature>
<feature type="binding site" evidence="1">
    <location>
        <position position="152"/>
    </location>
    <ligand>
        <name>pyridoxal 5'-phosphate</name>
        <dbReference type="ChEBI" id="CHEBI:597326"/>
    </ligand>
</feature>
<feature type="binding site" evidence="1">
    <location>
        <position position="172"/>
    </location>
    <ligand>
        <name>pyridoxal 5'-phosphate</name>
        <dbReference type="ChEBI" id="CHEBI:597326"/>
    </ligand>
</feature>
<feature type="binding site" evidence="1">
    <location>
        <position position="195"/>
    </location>
    <ligand>
        <name>pyridoxal 5'-phosphate</name>
        <dbReference type="ChEBI" id="CHEBI:597326"/>
    </ligand>
</feature>
<feature type="binding site" evidence="1">
    <location>
        <begin position="237"/>
        <end position="238"/>
    </location>
    <ligand>
        <name>pyridoxal 5'-phosphate</name>
        <dbReference type="ChEBI" id="CHEBI:597326"/>
    </ligand>
</feature>
<feature type="modified residue" description="N6-(pyridoxal phosphate)lysine" evidence="1">
    <location>
        <position position="196"/>
    </location>
</feature>